<sequence length="119" mass="13065">MKRIAFVFSTAPHGTAAGREGLDALLATSALTDDLAVFFIADGVFQLLSGQKPDAVLARDYIATFKLLSLYDIEQCWVCAASLRERGLDPQTPFVVEATPLEADALRRELANYDVILRF</sequence>
<protein>
    <recommendedName>
        <fullName evidence="1">Protein TusC</fullName>
    </recommendedName>
    <alternativeName>
        <fullName evidence="1">tRNA 2-thiouridine synthesizing protein C</fullName>
    </alternativeName>
</protein>
<accession>Q83JC1</accession>
<accession>Q7BYQ9</accession>
<reference key="1">
    <citation type="journal article" date="2002" name="Nucleic Acids Res.">
        <title>Genome sequence of Shigella flexneri 2a: insights into pathogenicity through comparison with genomes of Escherichia coli K12 and O157.</title>
        <authorList>
            <person name="Jin Q."/>
            <person name="Yuan Z."/>
            <person name="Xu J."/>
            <person name="Wang Y."/>
            <person name="Shen Y."/>
            <person name="Lu W."/>
            <person name="Wang J."/>
            <person name="Liu H."/>
            <person name="Yang J."/>
            <person name="Yang F."/>
            <person name="Zhang X."/>
            <person name="Zhang J."/>
            <person name="Yang G."/>
            <person name="Wu H."/>
            <person name="Qu D."/>
            <person name="Dong J."/>
            <person name="Sun L."/>
            <person name="Xue Y."/>
            <person name="Zhao A."/>
            <person name="Gao Y."/>
            <person name="Zhu J."/>
            <person name="Kan B."/>
            <person name="Ding K."/>
            <person name="Chen S."/>
            <person name="Cheng H."/>
            <person name="Yao Z."/>
            <person name="He B."/>
            <person name="Chen R."/>
            <person name="Ma D."/>
            <person name="Qiang B."/>
            <person name="Wen Y."/>
            <person name="Hou Y."/>
            <person name="Yu J."/>
        </authorList>
    </citation>
    <scope>NUCLEOTIDE SEQUENCE [LARGE SCALE GENOMIC DNA]</scope>
    <source>
        <strain>301 / Serotype 2a</strain>
    </source>
</reference>
<reference key="2">
    <citation type="journal article" date="2003" name="Infect. Immun.">
        <title>Complete genome sequence and comparative genomics of Shigella flexneri serotype 2a strain 2457T.</title>
        <authorList>
            <person name="Wei J."/>
            <person name="Goldberg M.B."/>
            <person name="Burland V."/>
            <person name="Venkatesan M.M."/>
            <person name="Deng W."/>
            <person name="Fournier G."/>
            <person name="Mayhew G.F."/>
            <person name="Plunkett G. III"/>
            <person name="Rose D.J."/>
            <person name="Darling A."/>
            <person name="Mau B."/>
            <person name="Perna N.T."/>
            <person name="Payne S.M."/>
            <person name="Runyen-Janecky L.J."/>
            <person name="Zhou S."/>
            <person name="Schwartz D.C."/>
            <person name="Blattner F.R."/>
        </authorList>
    </citation>
    <scope>NUCLEOTIDE SEQUENCE [LARGE SCALE GENOMIC DNA]</scope>
    <source>
        <strain>ATCC 700930 / 2457T / Serotype 2a</strain>
    </source>
</reference>
<comment type="function">
    <text evidence="1">Part of a sulfur-relay system required for 2-thiolation of 5-methylaminomethyl-2-thiouridine (mnm(5)s(2)U) at tRNA wobble positions.</text>
</comment>
<comment type="subunit">
    <text evidence="1">Heterohexamer, formed by a dimer of trimers. The hexameric TusBCD complex contains 2 copies each of TusB, TusC and TusD. The TusBCD complex interacts with TusE.</text>
</comment>
<comment type="subcellular location">
    <subcellularLocation>
        <location evidence="1">Cytoplasm</location>
    </subcellularLocation>
</comment>
<comment type="similarity">
    <text evidence="1">Belongs to the DsrF/TusC family.</text>
</comment>
<name>TUSC_SHIFL</name>
<dbReference type="EMBL" id="AE005674">
    <property type="protein sequence ID" value="AAN44825.1"/>
    <property type="molecule type" value="Genomic_DNA"/>
</dbReference>
<dbReference type="EMBL" id="AE014073">
    <property type="protein sequence ID" value="AAP19352.1"/>
    <property type="molecule type" value="Genomic_DNA"/>
</dbReference>
<dbReference type="RefSeq" id="WP_000820723.1">
    <property type="nucleotide sequence ID" value="NZ_WPGW01000003.1"/>
</dbReference>
<dbReference type="SMR" id="Q83JC1"/>
<dbReference type="STRING" id="198214.SF3362"/>
<dbReference type="PaxDb" id="198214-SF3362"/>
<dbReference type="KEGG" id="sfl:SF3362"/>
<dbReference type="KEGG" id="sfx:S4400"/>
<dbReference type="PATRIC" id="fig|198214.7.peg.3972"/>
<dbReference type="HOGENOM" id="CLU_155943_1_0_6"/>
<dbReference type="Proteomes" id="UP000001006">
    <property type="component" value="Chromosome"/>
</dbReference>
<dbReference type="Proteomes" id="UP000002673">
    <property type="component" value="Chromosome"/>
</dbReference>
<dbReference type="GO" id="GO:0005737">
    <property type="term" value="C:cytoplasm"/>
    <property type="evidence" value="ECO:0007669"/>
    <property type="project" value="UniProtKB-SubCell"/>
</dbReference>
<dbReference type="GO" id="GO:0008033">
    <property type="term" value="P:tRNA processing"/>
    <property type="evidence" value="ECO:0007669"/>
    <property type="project" value="UniProtKB-UniRule"/>
</dbReference>
<dbReference type="FunFam" id="3.40.1260.10:FF:000004">
    <property type="entry name" value="Sulfurtransferase TusC"/>
    <property type="match status" value="1"/>
</dbReference>
<dbReference type="Gene3D" id="3.40.1260.10">
    <property type="entry name" value="DsrEFH-like"/>
    <property type="match status" value="1"/>
</dbReference>
<dbReference type="HAMAP" id="MF_00389">
    <property type="entry name" value="Thiourid_synth_C"/>
    <property type="match status" value="1"/>
</dbReference>
<dbReference type="InterPro" id="IPR027396">
    <property type="entry name" value="DsrEFH-like"/>
</dbReference>
<dbReference type="InterPro" id="IPR003787">
    <property type="entry name" value="Sulphur_relay_DsrE/F-like"/>
</dbReference>
<dbReference type="InterPro" id="IPR037450">
    <property type="entry name" value="Sulphur_relay_TusC"/>
</dbReference>
<dbReference type="InterPro" id="IPR017462">
    <property type="entry name" value="Sulphur_relay_TusC/DsrF"/>
</dbReference>
<dbReference type="NCBIfam" id="NF001238">
    <property type="entry name" value="PRK00211.1"/>
    <property type="match status" value="1"/>
</dbReference>
<dbReference type="NCBIfam" id="TIGR03010">
    <property type="entry name" value="sulf_tusC_dsrF"/>
    <property type="match status" value="1"/>
</dbReference>
<dbReference type="PANTHER" id="PTHR38780">
    <property type="entry name" value="PROTEIN TUSC"/>
    <property type="match status" value="1"/>
</dbReference>
<dbReference type="PANTHER" id="PTHR38780:SF1">
    <property type="entry name" value="PROTEIN TUSC"/>
    <property type="match status" value="1"/>
</dbReference>
<dbReference type="Pfam" id="PF02635">
    <property type="entry name" value="DsrE"/>
    <property type="match status" value="1"/>
</dbReference>
<dbReference type="SUPFAM" id="SSF75169">
    <property type="entry name" value="DsrEFH-like"/>
    <property type="match status" value="1"/>
</dbReference>
<keyword id="KW-0963">Cytoplasm</keyword>
<keyword id="KW-1185">Reference proteome</keyword>
<keyword id="KW-0819">tRNA processing</keyword>
<feature type="chain" id="PRO_0000234458" description="Protein TusC">
    <location>
        <begin position="1"/>
        <end position="119"/>
    </location>
</feature>
<proteinExistence type="inferred from homology"/>
<evidence type="ECO:0000255" key="1">
    <source>
        <dbReference type="HAMAP-Rule" id="MF_00389"/>
    </source>
</evidence>
<organism>
    <name type="scientific">Shigella flexneri</name>
    <dbReference type="NCBI Taxonomy" id="623"/>
    <lineage>
        <taxon>Bacteria</taxon>
        <taxon>Pseudomonadati</taxon>
        <taxon>Pseudomonadota</taxon>
        <taxon>Gammaproteobacteria</taxon>
        <taxon>Enterobacterales</taxon>
        <taxon>Enterobacteriaceae</taxon>
        <taxon>Shigella</taxon>
    </lineage>
</organism>
<gene>
    <name evidence="1" type="primary">tusC</name>
    <name type="ordered locus">SF3362</name>
    <name type="ordered locus">S4400</name>
</gene>